<gene>
    <name type="primary">CHS6-4</name>
</gene>
<evidence type="ECO:0000255" key="1">
    <source>
        <dbReference type="PROSITE-ProRule" id="PRU10023"/>
    </source>
</evidence>
<evidence type="ECO:0000305" key="2"/>
<keyword id="KW-0012">Acyltransferase</keyword>
<keyword id="KW-0284">Flavonoid biosynthesis</keyword>
<keyword id="KW-0808">Transferase</keyword>
<name>CHS6_MEDSA</name>
<organism>
    <name type="scientific">Medicago sativa</name>
    <name type="common">Alfalfa</name>
    <dbReference type="NCBI Taxonomy" id="3879"/>
    <lineage>
        <taxon>Eukaryota</taxon>
        <taxon>Viridiplantae</taxon>
        <taxon>Streptophyta</taxon>
        <taxon>Embryophyta</taxon>
        <taxon>Tracheophyta</taxon>
        <taxon>Spermatophyta</taxon>
        <taxon>Magnoliopsida</taxon>
        <taxon>eudicotyledons</taxon>
        <taxon>Gunneridae</taxon>
        <taxon>Pentapetalae</taxon>
        <taxon>rosids</taxon>
        <taxon>fabids</taxon>
        <taxon>Fabales</taxon>
        <taxon>Fabaceae</taxon>
        <taxon>Papilionoideae</taxon>
        <taxon>50 kb inversion clade</taxon>
        <taxon>NPAAA clade</taxon>
        <taxon>Hologalegina</taxon>
        <taxon>IRL clade</taxon>
        <taxon>Trifolieae</taxon>
        <taxon>Medicago</taxon>
    </lineage>
</organism>
<feature type="chain" id="PRO_0000216011" description="Chalcone synthase 6-4">
    <location>
        <begin position="1" status="less than"/>
        <end position="285"/>
    </location>
</feature>
<feature type="active site" evidence="1">
    <location>
        <position position="60"/>
    </location>
</feature>
<feature type="non-terminal residue">
    <location>
        <position position="1"/>
    </location>
</feature>
<reference key="1">
    <citation type="journal article" date="1994" name="Plant Mol. Biol.">
        <title>Isolation of chalcone synthase and chalcone isomerase cDNAs from alfalfa (Medicago sativa L.): highest transcript levels occur in young roots and root tips.</title>
        <authorList>
            <person name="McKhann H.I."/>
            <person name="Hirsch A.M."/>
        </authorList>
    </citation>
    <scope>NUCLEOTIDE SEQUENCE [MRNA]</scope>
    <source>
        <strain>cv. Iroquois</strain>
        <tissue>Root nodule</tissue>
    </source>
</reference>
<protein>
    <recommendedName>
        <fullName>Chalcone synthase 6-4</fullName>
        <ecNumber>2.3.1.74</ecNumber>
    </recommendedName>
    <alternativeName>
        <fullName>Naringenin-chalcone synthase 6-4</fullName>
    </alternativeName>
</protein>
<dbReference type="EC" id="2.3.1.74"/>
<dbReference type="EMBL" id="U01020">
    <property type="protein sequence ID" value="AAB41558.1"/>
    <property type="molecule type" value="mRNA"/>
</dbReference>
<dbReference type="PIR" id="S44369">
    <property type="entry name" value="S44369"/>
</dbReference>
<dbReference type="SMR" id="P51079"/>
<dbReference type="UniPathway" id="UPA00154"/>
<dbReference type="GO" id="GO:0016210">
    <property type="term" value="F:naringenin-chalcone synthase activity"/>
    <property type="evidence" value="ECO:0007669"/>
    <property type="project" value="UniProtKB-EC"/>
</dbReference>
<dbReference type="GO" id="GO:0009813">
    <property type="term" value="P:flavonoid biosynthetic process"/>
    <property type="evidence" value="ECO:0007669"/>
    <property type="project" value="UniProtKB-UniPathway"/>
</dbReference>
<dbReference type="GO" id="GO:0030639">
    <property type="term" value="P:polyketide biosynthetic process"/>
    <property type="evidence" value="ECO:0007669"/>
    <property type="project" value="TreeGrafter"/>
</dbReference>
<dbReference type="CDD" id="cd00831">
    <property type="entry name" value="CHS_like"/>
    <property type="match status" value="1"/>
</dbReference>
<dbReference type="FunFam" id="3.40.47.10:FF:000014">
    <property type="entry name" value="Chalcone synthase 1"/>
    <property type="match status" value="1"/>
</dbReference>
<dbReference type="FunFam" id="3.40.47.10:FF:000025">
    <property type="entry name" value="Chalcone synthase 2"/>
    <property type="match status" value="1"/>
</dbReference>
<dbReference type="Gene3D" id="3.40.47.10">
    <property type="match status" value="2"/>
</dbReference>
<dbReference type="InterPro" id="IPR012328">
    <property type="entry name" value="Chalcone/stilbene_synt_C"/>
</dbReference>
<dbReference type="InterPro" id="IPR001099">
    <property type="entry name" value="Chalcone/stilbene_synt_N"/>
</dbReference>
<dbReference type="InterPro" id="IPR018088">
    <property type="entry name" value="Chalcone/stilbene_synthase_AS"/>
</dbReference>
<dbReference type="InterPro" id="IPR011141">
    <property type="entry name" value="Polyketide_synthase_type-III"/>
</dbReference>
<dbReference type="InterPro" id="IPR016039">
    <property type="entry name" value="Thiolase-like"/>
</dbReference>
<dbReference type="PANTHER" id="PTHR11877:SF62">
    <property type="entry name" value="CHALCONE SYNTHASE 7"/>
    <property type="match status" value="1"/>
</dbReference>
<dbReference type="PANTHER" id="PTHR11877">
    <property type="entry name" value="HYDROXYMETHYLGLUTARYL-COA SYNTHASE"/>
    <property type="match status" value="1"/>
</dbReference>
<dbReference type="Pfam" id="PF02797">
    <property type="entry name" value="Chal_sti_synt_C"/>
    <property type="match status" value="1"/>
</dbReference>
<dbReference type="Pfam" id="PF00195">
    <property type="entry name" value="Chal_sti_synt_N"/>
    <property type="match status" value="1"/>
</dbReference>
<dbReference type="SUPFAM" id="SSF53901">
    <property type="entry name" value="Thiolase-like"/>
    <property type="match status" value="1"/>
</dbReference>
<dbReference type="PROSITE" id="PS00441">
    <property type="entry name" value="CHALCONE_SYNTH"/>
    <property type="match status" value="1"/>
</dbReference>
<comment type="function">
    <text>The primary product of this enzyme is 4,2',4',6'-tetrahydroxychalcone (also termed naringenin-chalcone or chalcone) which can under specific conditions spontaneously isomerize into naringenin.</text>
</comment>
<comment type="catalytic activity">
    <reaction evidence="1">
        <text>(E)-4-coumaroyl-CoA + 3 malonyl-CoA + 3 H(+) = 2',4,4',6'-tetrahydroxychalcone + 3 CO2 + 4 CoA</text>
        <dbReference type="Rhea" id="RHEA:11128"/>
        <dbReference type="ChEBI" id="CHEBI:15378"/>
        <dbReference type="ChEBI" id="CHEBI:15413"/>
        <dbReference type="ChEBI" id="CHEBI:16526"/>
        <dbReference type="ChEBI" id="CHEBI:57287"/>
        <dbReference type="ChEBI" id="CHEBI:57384"/>
        <dbReference type="ChEBI" id="CHEBI:85008"/>
        <dbReference type="EC" id="2.3.1.74"/>
    </reaction>
</comment>
<comment type="pathway">
    <text>Secondary metabolite biosynthesis; flavonoid biosynthesis.</text>
</comment>
<comment type="developmental stage">
    <text>Highest expression in young root tips.</text>
</comment>
<comment type="similarity">
    <text evidence="2">Belongs to the thiolase-like superfamily. Chalcone/stilbene synthases family.</text>
</comment>
<sequence length="285" mass="30784">LGKEAAVKAIKEWGQPKSKITHLIFCTTSGVDMPGADYQLTKLLGLRPYVKRYMMYQQGCFAGGTVLRLAKDLAENNKGARVLVVCSEVTAVTFRGPSDTHLDSLVGQALFGDGAAALIVGSDPIPEIEKPIFEMVWTAQTIAPDSEGAIDGHLREAGLTFHLLKDVPGIVSKNIDKALVEAFQPLNISDYNSIFWIAHPGGPAILDQVEQKLGLKPEKMKATREVLSEYGNMSSACVLFILDEMRKKSAQQGLKTTGEGLDWGVLFGFGPGLTIETVVLHSVAL</sequence>
<accession>P51079</accession>
<proteinExistence type="evidence at transcript level"/>